<sequence>MSDSQTLVVKLGTSVLTGGSRRLNRAHIVELVRQCAQLHAAGHRIVIVTSGAIAAGREHLGYPELPATIASKQLLAAVGQSRLIQLWEQLFSIYGIHVGQMLLTRADMEDRERFLNARDTLRALLDNNIVPVINENDAVATAEIKVGDNDNLSALAAILAGADKLLLLTDQKGLYTADPRSNPQAELIKDVYGIDDALRAIAGDSVSGLGTGGMSTKLQAADVACRAGIDTIIAAGSKPGVIGDVMEGISVGTLFHAQATPLENRKRWIFGAPPAGEITVDEGATAAILERGSSLLPKGIKSVTGNFSRGEVIRICNLEGRDIAHGVSRYNSDALRRIAGHHSQEIDAILGYEYGPVAVHRDDMITR</sequence>
<proteinExistence type="inferred from homology"/>
<gene>
    <name evidence="1" type="primary">proB</name>
    <name type="ordered locus">ECSE_0262</name>
</gene>
<comment type="function">
    <text evidence="1">Catalyzes the transfer of a phosphate group to glutamate to form L-glutamate 5-phosphate.</text>
</comment>
<comment type="catalytic activity">
    <reaction evidence="1">
        <text>L-glutamate + ATP = L-glutamyl 5-phosphate + ADP</text>
        <dbReference type="Rhea" id="RHEA:14877"/>
        <dbReference type="ChEBI" id="CHEBI:29985"/>
        <dbReference type="ChEBI" id="CHEBI:30616"/>
        <dbReference type="ChEBI" id="CHEBI:58274"/>
        <dbReference type="ChEBI" id="CHEBI:456216"/>
        <dbReference type="EC" id="2.7.2.11"/>
    </reaction>
</comment>
<comment type="pathway">
    <text evidence="1">Amino-acid biosynthesis; L-proline biosynthesis; L-glutamate 5-semialdehyde from L-glutamate: step 1/2.</text>
</comment>
<comment type="subcellular location">
    <subcellularLocation>
        <location evidence="1">Cytoplasm</location>
    </subcellularLocation>
</comment>
<comment type="similarity">
    <text evidence="1">Belongs to the glutamate 5-kinase family.</text>
</comment>
<dbReference type="EC" id="2.7.2.11" evidence="1"/>
<dbReference type="EMBL" id="AP009240">
    <property type="protein sequence ID" value="BAG75786.1"/>
    <property type="molecule type" value="Genomic_DNA"/>
</dbReference>
<dbReference type="RefSeq" id="WP_001285288.1">
    <property type="nucleotide sequence ID" value="NC_011415.1"/>
</dbReference>
<dbReference type="SMR" id="B6I022"/>
<dbReference type="GeneID" id="93777151"/>
<dbReference type="KEGG" id="ecy:ECSE_0262"/>
<dbReference type="HOGENOM" id="CLU_025400_2_0_6"/>
<dbReference type="UniPathway" id="UPA00098">
    <property type="reaction ID" value="UER00359"/>
</dbReference>
<dbReference type="Proteomes" id="UP000008199">
    <property type="component" value="Chromosome"/>
</dbReference>
<dbReference type="GO" id="GO:0005829">
    <property type="term" value="C:cytosol"/>
    <property type="evidence" value="ECO:0007669"/>
    <property type="project" value="TreeGrafter"/>
</dbReference>
<dbReference type="GO" id="GO:0005524">
    <property type="term" value="F:ATP binding"/>
    <property type="evidence" value="ECO:0007669"/>
    <property type="project" value="UniProtKB-KW"/>
</dbReference>
<dbReference type="GO" id="GO:0004349">
    <property type="term" value="F:glutamate 5-kinase activity"/>
    <property type="evidence" value="ECO:0007669"/>
    <property type="project" value="UniProtKB-UniRule"/>
</dbReference>
<dbReference type="GO" id="GO:0003723">
    <property type="term" value="F:RNA binding"/>
    <property type="evidence" value="ECO:0007669"/>
    <property type="project" value="InterPro"/>
</dbReference>
<dbReference type="GO" id="GO:0055129">
    <property type="term" value="P:L-proline biosynthetic process"/>
    <property type="evidence" value="ECO:0007669"/>
    <property type="project" value="UniProtKB-UniRule"/>
</dbReference>
<dbReference type="CDD" id="cd04242">
    <property type="entry name" value="AAK_G5K_ProB"/>
    <property type="match status" value="1"/>
</dbReference>
<dbReference type="CDD" id="cd21157">
    <property type="entry name" value="PUA_G5K"/>
    <property type="match status" value="1"/>
</dbReference>
<dbReference type="FunFam" id="2.30.130.10:FF:000003">
    <property type="entry name" value="Glutamate 5-kinase"/>
    <property type="match status" value="1"/>
</dbReference>
<dbReference type="FunFam" id="3.40.1160.10:FF:000006">
    <property type="entry name" value="Glutamate 5-kinase"/>
    <property type="match status" value="1"/>
</dbReference>
<dbReference type="Gene3D" id="3.40.1160.10">
    <property type="entry name" value="Acetylglutamate kinase-like"/>
    <property type="match status" value="2"/>
</dbReference>
<dbReference type="Gene3D" id="2.30.130.10">
    <property type="entry name" value="PUA domain"/>
    <property type="match status" value="1"/>
</dbReference>
<dbReference type="HAMAP" id="MF_00456">
    <property type="entry name" value="ProB"/>
    <property type="match status" value="1"/>
</dbReference>
<dbReference type="InterPro" id="IPR036393">
    <property type="entry name" value="AceGlu_kinase-like_sf"/>
</dbReference>
<dbReference type="InterPro" id="IPR001048">
    <property type="entry name" value="Asp/Glu/Uridylate_kinase"/>
</dbReference>
<dbReference type="InterPro" id="IPR041739">
    <property type="entry name" value="G5K_ProB"/>
</dbReference>
<dbReference type="InterPro" id="IPR001057">
    <property type="entry name" value="Glu/AcGlu_kinase"/>
</dbReference>
<dbReference type="InterPro" id="IPR011529">
    <property type="entry name" value="Glu_5kinase"/>
</dbReference>
<dbReference type="InterPro" id="IPR005715">
    <property type="entry name" value="Glu_5kinase/COase_Synthase"/>
</dbReference>
<dbReference type="InterPro" id="IPR019797">
    <property type="entry name" value="Glutamate_5-kinase_CS"/>
</dbReference>
<dbReference type="InterPro" id="IPR002478">
    <property type="entry name" value="PUA"/>
</dbReference>
<dbReference type="InterPro" id="IPR015947">
    <property type="entry name" value="PUA-like_sf"/>
</dbReference>
<dbReference type="InterPro" id="IPR036974">
    <property type="entry name" value="PUA_sf"/>
</dbReference>
<dbReference type="NCBIfam" id="TIGR01027">
    <property type="entry name" value="proB"/>
    <property type="match status" value="1"/>
</dbReference>
<dbReference type="PANTHER" id="PTHR43654">
    <property type="entry name" value="GLUTAMATE 5-KINASE"/>
    <property type="match status" value="1"/>
</dbReference>
<dbReference type="PANTHER" id="PTHR43654:SF1">
    <property type="entry name" value="ISOPENTENYL PHOSPHATE KINASE"/>
    <property type="match status" value="1"/>
</dbReference>
<dbReference type="Pfam" id="PF00696">
    <property type="entry name" value="AA_kinase"/>
    <property type="match status" value="1"/>
</dbReference>
<dbReference type="Pfam" id="PF01472">
    <property type="entry name" value="PUA"/>
    <property type="match status" value="1"/>
</dbReference>
<dbReference type="PIRSF" id="PIRSF000729">
    <property type="entry name" value="GK"/>
    <property type="match status" value="1"/>
</dbReference>
<dbReference type="PRINTS" id="PR00474">
    <property type="entry name" value="GLU5KINASE"/>
</dbReference>
<dbReference type="SMART" id="SM00359">
    <property type="entry name" value="PUA"/>
    <property type="match status" value="1"/>
</dbReference>
<dbReference type="SUPFAM" id="SSF53633">
    <property type="entry name" value="Carbamate kinase-like"/>
    <property type="match status" value="1"/>
</dbReference>
<dbReference type="SUPFAM" id="SSF88697">
    <property type="entry name" value="PUA domain-like"/>
    <property type="match status" value="1"/>
</dbReference>
<dbReference type="PROSITE" id="PS00902">
    <property type="entry name" value="GLUTAMATE_5_KINASE"/>
    <property type="match status" value="1"/>
</dbReference>
<dbReference type="PROSITE" id="PS50890">
    <property type="entry name" value="PUA"/>
    <property type="match status" value="1"/>
</dbReference>
<feature type="chain" id="PRO_1000125234" description="Glutamate 5-kinase">
    <location>
        <begin position="1"/>
        <end position="367"/>
    </location>
</feature>
<feature type="domain" description="PUA" evidence="1">
    <location>
        <begin position="275"/>
        <end position="353"/>
    </location>
</feature>
<feature type="binding site" evidence="1">
    <location>
        <position position="10"/>
    </location>
    <ligand>
        <name>ATP</name>
        <dbReference type="ChEBI" id="CHEBI:30616"/>
    </ligand>
</feature>
<feature type="binding site" evidence="1">
    <location>
        <position position="50"/>
    </location>
    <ligand>
        <name>substrate</name>
    </ligand>
</feature>
<feature type="binding site" evidence="1">
    <location>
        <position position="137"/>
    </location>
    <ligand>
        <name>substrate</name>
    </ligand>
</feature>
<feature type="binding site" evidence="1">
    <location>
        <position position="149"/>
    </location>
    <ligand>
        <name>substrate</name>
    </ligand>
</feature>
<feature type="binding site" evidence="1">
    <location>
        <begin position="169"/>
        <end position="170"/>
    </location>
    <ligand>
        <name>ATP</name>
        <dbReference type="ChEBI" id="CHEBI:30616"/>
    </ligand>
</feature>
<feature type="binding site" evidence="1">
    <location>
        <begin position="211"/>
        <end position="217"/>
    </location>
    <ligand>
        <name>ATP</name>
        <dbReference type="ChEBI" id="CHEBI:30616"/>
    </ligand>
</feature>
<keyword id="KW-0028">Amino-acid biosynthesis</keyword>
<keyword id="KW-0067">ATP-binding</keyword>
<keyword id="KW-0963">Cytoplasm</keyword>
<keyword id="KW-0418">Kinase</keyword>
<keyword id="KW-0547">Nucleotide-binding</keyword>
<keyword id="KW-0641">Proline biosynthesis</keyword>
<keyword id="KW-0808">Transferase</keyword>
<accession>B6I022</accession>
<reference key="1">
    <citation type="journal article" date="2008" name="DNA Res.">
        <title>Complete genome sequence and comparative analysis of the wild-type commensal Escherichia coli strain SE11 isolated from a healthy adult.</title>
        <authorList>
            <person name="Oshima K."/>
            <person name="Toh H."/>
            <person name="Ogura Y."/>
            <person name="Sasamoto H."/>
            <person name="Morita H."/>
            <person name="Park S.-H."/>
            <person name="Ooka T."/>
            <person name="Iyoda S."/>
            <person name="Taylor T.D."/>
            <person name="Hayashi T."/>
            <person name="Itoh K."/>
            <person name="Hattori M."/>
        </authorList>
    </citation>
    <scope>NUCLEOTIDE SEQUENCE [LARGE SCALE GENOMIC DNA]</scope>
    <source>
        <strain>SE11</strain>
    </source>
</reference>
<evidence type="ECO:0000255" key="1">
    <source>
        <dbReference type="HAMAP-Rule" id="MF_00456"/>
    </source>
</evidence>
<organism>
    <name type="scientific">Escherichia coli (strain SE11)</name>
    <dbReference type="NCBI Taxonomy" id="409438"/>
    <lineage>
        <taxon>Bacteria</taxon>
        <taxon>Pseudomonadati</taxon>
        <taxon>Pseudomonadota</taxon>
        <taxon>Gammaproteobacteria</taxon>
        <taxon>Enterobacterales</taxon>
        <taxon>Enterobacteriaceae</taxon>
        <taxon>Escherichia</taxon>
    </lineage>
</organism>
<protein>
    <recommendedName>
        <fullName evidence="1">Glutamate 5-kinase</fullName>
        <ecNumber evidence="1">2.7.2.11</ecNumber>
    </recommendedName>
    <alternativeName>
        <fullName evidence="1">Gamma-glutamyl kinase</fullName>
        <shortName evidence="1">GK</shortName>
    </alternativeName>
</protein>
<name>PROB_ECOSE</name>